<gene>
    <name evidence="1" type="primary">fusA</name>
    <name type="ordered locus">MMAR_1013</name>
</gene>
<dbReference type="EMBL" id="CP000854">
    <property type="protein sequence ID" value="ACC39470.1"/>
    <property type="molecule type" value="Genomic_DNA"/>
</dbReference>
<dbReference type="RefSeq" id="WP_012392922.1">
    <property type="nucleotide sequence ID" value="NC_010612.1"/>
</dbReference>
<dbReference type="SMR" id="B2HSL2"/>
<dbReference type="STRING" id="216594.MMAR_1013"/>
<dbReference type="KEGG" id="mmi:MMAR_1013"/>
<dbReference type="eggNOG" id="COG0480">
    <property type="taxonomic scope" value="Bacteria"/>
</dbReference>
<dbReference type="HOGENOM" id="CLU_002794_4_1_11"/>
<dbReference type="OrthoDB" id="9801472at2"/>
<dbReference type="Proteomes" id="UP000001190">
    <property type="component" value="Chromosome"/>
</dbReference>
<dbReference type="GO" id="GO:0005737">
    <property type="term" value="C:cytoplasm"/>
    <property type="evidence" value="ECO:0007669"/>
    <property type="project" value="UniProtKB-SubCell"/>
</dbReference>
<dbReference type="GO" id="GO:0005525">
    <property type="term" value="F:GTP binding"/>
    <property type="evidence" value="ECO:0007669"/>
    <property type="project" value="UniProtKB-UniRule"/>
</dbReference>
<dbReference type="GO" id="GO:0003924">
    <property type="term" value="F:GTPase activity"/>
    <property type="evidence" value="ECO:0007669"/>
    <property type="project" value="InterPro"/>
</dbReference>
<dbReference type="GO" id="GO:0003746">
    <property type="term" value="F:translation elongation factor activity"/>
    <property type="evidence" value="ECO:0007669"/>
    <property type="project" value="UniProtKB-UniRule"/>
</dbReference>
<dbReference type="GO" id="GO:0032790">
    <property type="term" value="P:ribosome disassembly"/>
    <property type="evidence" value="ECO:0007669"/>
    <property type="project" value="TreeGrafter"/>
</dbReference>
<dbReference type="CDD" id="cd01886">
    <property type="entry name" value="EF-G"/>
    <property type="match status" value="1"/>
</dbReference>
<dbReference type="CDD" id="cd16262">
    <property type="entry name" value="EFG_III"/>
    <property type="match status" value="1"/>
</dbReference>
<dbReference type="CDD" id="cd01434">
    <property type="entry name" value="EFG_mtEFG1_IV"/>
    <property type="match status" value="1"/>
</dbReference>
<dbReference type="CDD" id="cd03713">
    <property type="entry name" value="EFG_mtEFG_C"/>
    <property type="match status" value="1"/>
</dbReference>
<dbReference type="CDD" id="cd04088">
    <property type="entry name" value="EFG_mtEFG_II"/>
    <property type="match status" value="1"/>
</dbReference>
<dbReference type="FunFam" id="2.40.30.10:FF:000006">
    <property type="entry name" value="Elongation factor G"/>
    <property type="match status" value="1"/>
</dbReference>
<dbReference type="FunFam" id="3.30.230.10:FF:000003">
    <property type="entry name" value="Elongation factor G"/>
    <property type="match status" value="1"/>
</dbReference>
<dbReference type="FunFam" id="3.30.70.240:FF:000001">
    <property type="entry name" value="Elongation factor G"/>
    <property type="match status" value="1"/>
</dbReference>
<dbReference type="FunFam" id="3.30.70.870:FF:000001">
    <property type="entry name" value="Elongation factor G"/>
    <property type="match status" value="1"/>
</dbReference>
<dbReference type="FunFam" id="3.40.50.300:FF:000029">
    <property type="entry name" value="Elongation factor G"/>
    <property type="match status" value="1"/>
</dbReference>
<dbReference type="Gene3D" id="3.30.230.10">
    <property type="match status" value="1"/>
</dbReference>
<dbReference type="Gene3D" id="3.30.70.240">
    <property type="match status" value="1"/>
</dbReference>
<dbReference type="Gene3D" id="3.30.70.870">
    <property type="entry name" value="Elongation Factor G (Translational Gtpase), domain 3"/>
    <property type="match status" value="1"/>
</dbReference>
<dbReference type="Gene3D" id="3.40.50.300">
    <property type="entry name" value="P-loop containing nucleotide triphosphate hydrolases"/>
    <property type="match status" value="1"/>
</dbReference>
<dbReference type="Gene3D" id="2.40.30.10">
    <property type="entry name" value="Translation factors"/>
    <property type="match status" value="1"/>
</dbReference>
<dbReference type="HAMAP" id="MF_00054_B">
    <property type="entry name" value="EF_G_EF_2_B"/>
    <property type="match status" value="1"/>
</dbReference>
<dbReference type="InterPro" id="IPR041095">
    <property type="entry name" value="EFG_II"/>
</dbReference>
<dbReference type="InterPro" id="IPR009022">
    <property type="entry name" value="EFG_III"/>
</dbReference>
<dbReference type="InterPro" id="IPR035647">
    <property type="entry name" value="EFG_III/V"/>
</dbReference>
<dbReference type="InterPro" id="IPR047872">
    <property type="entry name" value="EFG_IV"/>
</dbReference>
<dbReference type="InterPro" id="IPR035649">
    <property type="entry name" value="EFG_V"/>
</dbReference>
<dbReference type="InterPro" id="IPR000640">
    <property type="entry name" value="EFG_V-like"/>
</dbReference>
<dbReference type="InterPro" id="IPR004161">
    <property type="entry name" value="EFTu-like_2"/>
</dbReference>
<dbReference type="InterPro" id="IPR031157">
    <property type="entry name" value="G_TR_CS"/>
</dbReference>
<dbReference type="InterPro" id="IPR027417">
    <property type="entry name" value="P-loop_NTPase"/>
</dbReference>
<dbReference type="InterPro" id="IPR020568">
    <property type="entry name" value="Ribosomal_Su5_D2-typ_SF"/>
</dbReference>
<dbReference type="InterPro" id="IPR014721">
    <property type="entry name" value="Ribsml_uS5_D2-typ_fold_subgr"/>
</dbReference>
<dbReference type="InterPro" id="IPR005225">
    <property type="entry name" value="Small_GTP-bd"/>
</dbReference>
<dbReference type="InterPro" id="IPR000795">
    <property type="entry name" value="T_Tr_GTP-bd_dom"/>
</dbReference>
<dbReference type="InterPro" id="IPR009000">
    <property type="entry name" value="Transl_B-barrel_sf"/>
</dbReference>
<dbReference type="InterPro" id="IPR004540">
    <property type="entry name" value="Transl_elong_EFG/EF2"/>
</dbReference>
<dbReference type="InterPro" id="IPR005517">
    <property type="entry name" value="Transl_elong_EFG/EF2_IV"/>
</dbReference>
<dbReference type="NCBIfam" id="TIGR00484">
    <property type="entry name" value="EF-G"/>
    <property type="match status" value="1"/>
</dbReference>
<dbReference type="NCBIfam" id="NF009381">
    <property type="entry name" value="PRK12740.1-5"/>
    <property type="match status" value="1"/>
</dbReference>
<dbReference type="NCBIfam" id="TIGR00231">
    <property type="entry name" value="small_GTP"/>
    <property type="match status" value="1"/>
</dbReference>
<dbReference type="PANTHER" id="PTHR43261:SF1">
    <property type="entry name" value="RIBOSOME-RELEASING FACTOR 2, MITOCHONDRIAL"/>
    <property type="match status" value="1"/>
</dbReference>
<dbReference type="PANTHER" id="PTHR43261">
    <property type="entry name" value="TRANSLATION ELONGATION FACTOR G-RELATED"/>
    <property type="match status" value="1"/>
</dbReference>
<dbReference type="Pfam" id="PF00679">
    <property type="entry name" value="EFG_C"/>
    <property type="match status" value="1"/>
</dbReference>
<dbReference type="Pfam" id="PF14492">
    <property type="entry name" value="EFG_III"/>
    <property type="match status" value="1"/>
</dbReference>
<dbReference type="Pfam" id="PF03764">
    <property type="entry name" value="EFG_IV"/>
    <property type="match status" value="1"/>
</dbReference>
<dbReference type="Pfam" id="PF00009">
    <property type="entry name" value="GTP_EFTU"/>
    <property type="match status" value="1"/>
</dbReference>
<dbReference type="Pfam" id="PF03144">
    <property type="entry name" value="GTP_EFTU_D2"/>
    <property type="match status" value="1"/>
</dbReference>
<dbReference type="PRINTS" id="PR00315">
    <property type="entry name" value="ELONGATNFCT"/>
</dbReference>
<dbReference type="SMART" id="SM00838">
    <property type="entry name" value="EFG_C"/>
    <property type="match status" value="1"/>
</dbReference>
<dbReference type="SMART" id="SM00889">
    <property type="entry name" value="EFG_IV"/>
    <property type="match status" value="1"/>
</dbReference>
<dbReference type="SUPFAM" id="SSF54980">
    <property type="entry name" value="EF-G C-terminal domain-like"/>
    <property type="match status" value="2"/>
</dbReference>
<dbReference type="SUPFAM" id="SSF52540">
    <property type="entry name" value="P-loop containing nucleoside triphosphate hydrolases"/>
    <property type="match status" value="1"/>
</dbReference>
<dbReference type="SUPFAM" id="SSF54211">
    <property type="entry name" value="Ribosomal protein S5 domain 2-like"/>
    <property type="match status" value="1"/>
</dbReference>
<dbReference type="SUPFAM" id="SSF50447">
    <property type="entry name" value="Translation proteins"/>
    <property type="match status" value="1"/>
</dbReference>
<dbReference type="PROSITE" id="PS00301">
    <property type="entry name" value="G_TR_1"/>
    <property type="match status" value="1"/>
</dbReference>
<dbReference type="PROSITE" id="PS51722">
    <property type="entry name" value="G_TR_2"/>
    <property type="match status" value="1"/>
</dbReference>
<organism>
    <name type="scientific">Mycobacterium marinum (strain ATCC BAA-535 / M)</name>
    <dbReference type="NCBI Taxonomy" id="216594"/>
    <lineage>
        <taxon>Bacteria</taxon>
        <taxon>Bacillati</taxon>
        <taxon>Actinomycetota</taxon>
        <taxon>Actinomycetes</taxon>
        <taxon>Mycobacteriales</taxon>
        <taxon>Mycobacteriaceae</taxon>
        <taxon>Mycobacterium</taxon>
        <taxon>Mycobacterium ulcerans group</taxon>
    </lineage>
</organism>
<sequence length="701" mass="76965">MAQKDVLTDLTKVRNIGIMAHIDAGKTTTTERILYYTGISYKIGEVHDGAATMDWMEQEQERGITITSAATTCFWNDNQINIIDTPGHVDFTVEVERSLRVLDGAVAVFDGKEGVEPQSEQVWRQADKYDVPRICFVNKMDKIGADFYFSVRTMEERLGANVIPIQLPVGSEGDFEGVVDLVEMKAKVWSADAKLGEKYDVVDIPADLQEKADEYRTKLLEAVAETDEALLEKYLGGEELTEAEIKGAIRKLTITSEAYPVLCGSAFKNKGVQPMLDAVIDYLPSPLDVPAAIGHVPGKEDEEVVRKPSTDEPFSALAFKVATHPFFGKLTYVRVYSGKVDSGSQVINSTKGKKERLGKLFQMHSNKENPVETASAGHIYAVIGLKDTTTGDTLSDPNNQIVLESMTFPDPVIEVAIEPKTKSDQEKLSLSIQKLAEEDPTFKVHLDQETGQTVIGGMGELHLDILVDRMRREFKVEANVGKPQVAYKETIKRLVEKVEFTHKKQTGGSGQFAKVLISIEPFTGEDGATYEFESKVTGGRIPREYIPSVDAGAQDAMQYGVLAGYPLVNLKVTLLDGAFHEVDSSEMAFKIAGSQVLKKAAAAAHPVILEPIMAVEVTTPEDYMGDVIGDLNSRRGQIQAMEERSGARVVKAHVPLSEMFGYVGDLRSKTQGRANYSMVFDSYAEVPANVSKEIIAKATGE</sequence>
<evidence type="ECO:0000255" key="1">
    <source>
        <dbReference type="HAMAP-Rule" id="MF_00054"/>
    </source>
</evidence>
<reference key="1">
    <citation type="journal article" date="2008" name="Genome Res.">
        <title>Insights from the complete genome sequence of Mycobacterium marinum on the evolution of Mycobacterium tuberculosis.</title>
        <authorList>
            <person name="Stinear T.P."/>
            <person name="Seemann T."/>
            <person name="Harrison P.F."/>
            <person name="Jenkin G.A."/>
            <person name="Davies J.K."/>
            <person name="Johnson P.D."/>
            <person name="Abdellah Z."/>
            <person name="Arrowsmith C."/>
            <person name="Chillingworth T."/>
            <person name="Churcher C."/>
            <person name="Clarke K."/>
            <person name="Cronin A."/>
            <person name="Davis P."/>
            <person name="Goodhead I."/>
            <person name="Holroyd N."/>
            <person name="Jagels K."/>
            <person name="Lord A."/>
            <person name="Moule S."/>
            <person name="Mungall K."/>
            <person name="Norbertczak H."/>
            <person name="Quail M.A."/>
            <person name="Rabbinowitsch E."/>
            <person name="Walker D."/>
            <person name="White B."/>
            <person name="Whitehead S."/>
            <person name="Small P.L."/>
            <person name="Brosch R."/>
            <person name="Ramakrishnan L."/>
            <person name="Fischbach M.A."/>
            <person name="Parkhill J."/>
            <person name="Cole S.T."/>
        </authorList>
    </citation>
    <scope>NUCLEOTIDE SEQUENCE [LARGE SCALE GENOMIC DNA]</scope>
    <source>
        <strain>ATCC BAA-535 / M</strain>
    </source>
</reference>
<feature type="chain" id="PRO_1000091738" description="Elongation factor G">
    <location>
        <begin position="1"/>
        <end position="701"/>
    </location>
</feature>
<feature type="domain" description="tr-type G">
    <location>
        <begin position="11"/>
        <end position="287"/>
    </location>
</feature>
<feature type="binding site" evidence="1">
    <location>
        <begin position="20"/>
        <end position="27"/>
    </location>
    <ligand>
        <name>GTP</name>
        <dbReference type="ChEBI" id="CHEBI:37565"/>
    </ligand>
</feature>
<feature type="binding site" evidence="1">
    <location>
        <begin position="84"/>
        <end position="88"/>
    </location>
    <ligand>
        <name>GTP</name>
        <dbReference type="ChEBI" id="CHEBI:37565"/>
    </ligand>
</feature>
<feature type="binding site" evidence="1">
    <location>
        <begin position="138"/>
        <end position="141"/>
    </location>
    <ligand>
        <name>GTP</name>
        <dbReference type="ChEBI" id="CHEBI:37565"/>
    </ligand>
</feature>
<proteinExistence type="inferred from homology"/>
<protein>
    <recommendedName>
        <fullName evidence="1">Elongation factor G</fullName>
        <shortName evidence="1">EF-G</shortName>
    </recommendedName>
</protein>
<accession>B2HSL2</accession>
<comment type="function">
    <text evidence="1">Catalyzes the GTP-dependent ribosomal translocation step during translation elongation. During this step, the ribosome changes from the pre-translocational (PRE) to the post-translocational (POST) state as the newly formed A-site-bound peptidyl-tRNA and P-site-bound deacylated tRNA move to the P and E sites, respectively. Catalyzes the coordinated movement of the two tRNA molecules, the mRNA and conformational changes in the ribosome.</text>
</comment>
<comment type="subcellular location">
    <subcellularLocation>
        <location evidence="1">Cytoplasm</location>
    </subcellularLocation>
</comment>
<comment type="similarity">
    <text evidence="1">Belongs to the TRAFAC class translation factor GTPase superfamily. Classic translation factor GTPase family. EF-G/EF-2 subfamily.</text>
</comment>
<name>EFG_MYCMM</name>
<keyword id="KW-0963">Cytoplasm</keyword>
<keyword id="KW-0251">Elongation factor</keyword>
<keyword id="KW-0342">GTP-binding</keyword>
<keyword id="KW-0547">Nucleotide-binding</keyword>
<keyword id="KW-0648">Protein biosynthesis</keyword>
<keyword id="KW-1185">Reference proteome</keyword>